<accession>A9BD24</accession>
<reference key="1">
    <citation type="journal article" date="2007" name="PLoS Genet.">
        <title>Patterns and implications of gene gain and loss in the evolution of Prochlorococcus.</title>
        <authorList>
            <person name="Kettler G.C."/>
            <person name="Martiny A.C."/>
            <person name="Huang K."/>
            <person name="Zucker J."/>
            <person name="Coleman M.L."/>
            <person name="Rodrigue S."/>
            <person name="Chen F."/>
            <person name="Lapidus A."/>
            <person name="Ferriera S."/>
            <person name="Johnson J."/>
            <person name="Steglich C."/>
            <person name="Church G.M."/>
            <person name="Richardson P."/>
            <person name="Chisholm S.W."/>
        </authorList>
    </citation>
    <scope>NUCLEOTIDE SEQUENCE [LARGE SCALE GENOMIC DNA]</scope>
    <source>
        <strain>MIT 9211</strain>
    </source>
</reference>
<sequence>MTSTLPSQPKDMELANSSRPSVHGRFGRFGGQYVPETLMPALAELEKKAAEAWQDSSFTNELSHLLKTYVGRATPLYEAKRLSQHYMSREGGPRIWLKREDLNHTGAHKINNALGQALLAIRMGKKRIIAETGAGQHGVATATVCARFGLECVIYMGQEDMERQALNVFRMKLLGAKVQSVTAGTATLKDATSEAIRDWVTNVESTHYILGSVAGPHPYPMLVRDFHSVIGEETKQQCKEAFGRSPDVLLACVGGGSNAMGLFHSFIEDLSVKMIGVEAAGDGVNTKRHAATITQGSVGVLHGAMSLLLQDSDGQVQEAHSISAGLDYPGVGPEHSYLNEIGRAEYVAVTDKEALNALELVSKLEGIIPALETAHAFAWLDTLCPSLAPGTEIVINCSGRGDKDVNTVAKKMGFEI</sequence>
<name>TRPB_PROM4</name>
<evidence type="ECO:0000255" key="1">
    <source>
        <dbReference type="HAMAP-Rule" id="MF_00133"/>
    </source>
</evidence>
<evidence type="ECO:0000256" key="2">
    <source>
        <dbReference type="SAM" id="MobiDB-lite"/>
    </source>
</evidence>
<gene>
    <name evidence="1" type="primary">trpB</name>
    <name type="ordered locus">P9211_01811</name>
</gene>
<feature type="chain" id="PRO_1000095802" description="Tryptophan synthase beta chain">
    <location>
        <begin position="1"/>
        <end position="416"/>
    </location>
</feature>
<feature type="region of interest" description="Disordered" evidence="2">
    <location>
        <begin position="1"/>
        <end position="23"/>
    </location>
</feature>
<feature type="modified residue" description="N6-(pyridoxal phosphate)lysine" evidence="1">
    <location>
        <position position="109"/>
    </location>
</feature>
<protein>
    <recommendedName>
        <fullName evidence="1">Tryptophan synthase beta chain</fullName>
        <ecNumber evidence="1">4.2.1.20</ecNumber>
    </recommendedName>
</protein>
<organism>
    <name type="scientific">Prochlorococcus marinus (strain MIT 9211)</name>
    <dbReference type="NCBI Taxonomy" id="93059"/>
    <lineage>
        <taxon>Bacteria</taxon>
        <taxon>Bacillati</taxon>
        <taxon>Cyanobacteriota</taxon>
        <taxon>Cyanophyceae</taxon>
        <taxon>Synechococcales</taxon>
        <taxon>Prochlorococcaceae</taxon>
        <taxon>Prochlorococcus</taxon>
    </lineage>
</organism>
<dbReference type="EC" id="4.2.1.20" evidence="1"/>
<dbReference type="EMBL" id="CP000878">
    <property type="protein sequence ID" value="ABX08112.1"/>
    <property type="molecule type" value="Genomic_DNA"/>
</dbReference>
<dbReference type="RefSeq" id="WP_012194737.1">
    <property type="nucleotide sequence ID" value="NC_009976.1"/>
</dbReference>
<dbReference type="SMR" id="A9BD24"/>
<dbReference type="STRING" id="93059.P9211_01811"/>
<dbReference type="KEGG" id="pmj:P9211_01811"/>
<dbReference type="eggNOG" id="COG0133">
    <property type="taxonomic scope" value="Bacteria"/>
</dbReference>
<dbReference type="HOGENOM" id="CLU_016734_3_1_3"/>
<dbReference type="OrthoDB" id="9766131at2"/>
<dbReference type="UniPathway" id="UPA00035">
    <property type="reaction ID" value="UER00044"/>
</dbReference>
<dbReference type="Proteomes" id="UP000000788">
    <property type="component" value="Chromosome"/>
</dbReference>
<dbReference type="GO" id="GO:0005737">
    <property type="term" value="C:cytoplasm"/>
    <property type="evidence" value="ECO:0007669"/>
    <property type="project" value="TreeGrafter"/>
</dbReference>
<dbReference type="GO" id="GO:0004834">
    <property type="term" value="F:tryptophan synthase activity"/>
    <property type="evidence" value="ECO:0007669"/>
    <property type="project" value="UniProtKB-UniRule"/>
</dbReference>
<dbReference type="CDD" id="cd06446">
    <property type="entry name" value="Trp-synth_B"/>
    <property type="match status" value="1"/>
</dbReference>
<dbReference type="FunFam" id="3.40.50.1100:FF:000001">
    <property type="entry name" value="Tryptophan synthase beta chain"/>
    <property type="match status" value="1"/>
</dbReference>
<dbReference type="FunFam" id="3.40.50.1100:FF:000004">
    <property type="entry name" value="Tryptophan synthase beta chain"/>
    <property type="match status" value="1"/>
</dbReference>
<dbReference type="Gene3D" id="3.40.50.1100">
    <property type="match status" value="2"/>
</dbReference>
<dbReference type="HAMAP" id="MF_00133">
    <property type="entry name" value="Trp_synth_beta"/>
    <property type="match status" value="1"/>
</dbReference>
<dbReference type="InterPro" id="IPR006653">
    <property type="entry name" value="Trp_synth_b_CS"/>
</dbReference>
<dbReference type="InterPro" id="IPR006654">
    <property type="entry name" value="Trp_synth_beta"/>
</dbReference>
<dbReference type="InterPro" id="IPR023026">
    <property type="entry name" value="Trp_synth_beta/beta-like"/>
</dbReference>
<dbReference type="InterPro" id="IPR001926">
    <property type="entry name" value="TrpB-like_PALP"/>
</dbReference>
<dbReference type="InterPro" id="IPR036052">
    <property type="entry name" value="TrpB-like_PALP_sf"/>
</dbReference>
<dbReference type="NCBIfam" id="TIGR00263">
    <property type="entry name" value="trpB"/>
    <property type="match status" value="1"/>
</dbReference>
<dbReference type="PANTHER" id="PTHR48077:SF3">
    <property type="entry name" value="TRYPTOPHAN SYNTHASE"/>
    <property type="match status" value="1"/>
</dbReference>
<dbReference type="PANTHER" id="PTHR48077">
    <property type="entry name" value="TRYPTOPHAN SYNTHASE-RELATED"/>
    <property type="match status" value="1"/>
</dbReference>
<dbReference type="Pfam" id="PF00291">
    <property type="entry name" value="PALP"/>
    <property type="match status" value="1"/>
</dbReference>
<dbReference type="PIRSF" id="PIRSF001413">
    <property type="entry name" value="Trp_syn_beta"/>
    <property type="match status" value="1"/>
</dbReference>
<dbReference type="SUPFAM" id="SSF53686">
    <property type="entry name" value="Tryptophan synthase beta subunit-like PLP-dependent enzymes"/>
    <property type="match status" value="1"/>
</dbReference>
<dbReference type="PROSITE" id="PS00168">
    <property type="entry name" value="TRP_SYNTHASE_BETA"/>
    <property type="match status" value="1"/>
</dbReference>
<proteinExistence type="inferred from homology"/>
<comment type="function">
    <text evidence="1">The beta subunit is responsible for the synthesis of L-tryptophan from indole and L-serine.</text>
</comment>
<comment type="catalytic activity">
    <reaction evidence="1">
        <text>(1S,2R)-1-C-(indol-3-yl)glycerol 3-phosphate + L-serine = D-glyceraldehyde 3-phosphate + L-tryptophan + H2O</text>
        <dbReference type="Rhea" id="RHEA:10532"/>
        <dbReference type="ChEBI" id="CHEBI:15377"/>
        <dbReference type="ChEBI" id="CHEBI:33384"/>
        <dbReference type="ChEBI" id="CHEBI:57912"/>
        <dbReference type="ChEBI" id="CHEBI:58866"/>
        <dbReference type="ChEBI" id="CHEBI:59776"/>
        <dbReference type="EC" id="4.2.1.20"/>
    </reaction>
</comment>
<comment type="cofactor">
    <cofactor evidence="1">
        <name>pyridoxal 5'-phosphate</name>
        <dbReference type="ChEBI" id="CHEBI:597326"/>
    </cofactor>
</comment>
<comment type="pathway">
    <text evidence="1">Amino-acid biosynthesis; L-tryptophan biosynthesis; L-tryptophan from chorismate: step 5/5.</text>
</comment>
<comment type="subunit">
    <text evidence="1">Tetramer of two alpha and two beta chains.</text>
</comment>
<comment type="similarity">
    <text evidence="1">Belongs to the TrpB family.</text>
</comment>
<keyword id="KW-0028">Amino-acid biosynthesis</keyword>
<keyword id="KW-0057">Aromatic amino acid biosynthesis</keyword>
<keyword id="KW-0456">Lyase</keyword>
<keyword id="KW-0663">Pyridoxal phosphate</keyword>
<keyword id="KW-1185">Reference proteome</keyword>
<keyword id="KW-0822">Tryptophan biosynthesis</keyword>